<organism>
    <name type="scientific">Actinobacillus pleuropneumoniae serotype 5b (strain L20)</name>
    <dbReference type="NCBI Taxonomy" id="416269"/>
    <lineage>
        <taxon>Bacteria</taxon>
        <taxon>Pseudomonadati</taxon>
        <taxon>Pseudomonadota</taxon>
        <taxon>Gammaproteobacteria</taxon>
        <taxon>Pasteurellales</taxon>
        <taxon>Pasteurellaceae</taxon>
        <taxon>Actinobacillus</taxon>
    </lineage>
</organism>
<accession>A3N262</accession>
<keyword id="KW-0274">FAD</keyword>
<keyword id="KW-0285">Flavoprotein</keyword>
<keyword id="KW-0560">Oxidoreductase</keyword>
<keyword id="KW-1185">Reference proteome</keyword>
<keyword id="KW-0816">Tricarboxylic acid cycle</keyword>
<reference key="1">
    <citation type="journal article" date="2008" name="J. Bacteriol.">
        <title>The complete genome sequence of Actinobacillus pleuropneumoniae L20 (serotype 5b).</title>
        <authorList>
            <person name="Foote S.J."/>
            <person name="Bosse J.T."/>
            <person name="Bouevitch A.B."/>
            <person name="Langford P.R."/>
            <person name="Young N.M."/>
            <person name="Nash J.H.E."/>
        </authorList>
    </citation>
    <scope>NUCLEOTIDE SEQUENCE [LARGE SCALE GENOMIC DNA]</scope>
    <source>
        <strain>L20</strain>
    </source>
</reference>
<protein>
    <recommendedName>
        <fullName evidence="1">Probable malate:quinone oxidoreductase</fullName>
        <ecNumber evidence="1">1.1.5.4</ecNumber>
    </recommendedName>
    <alternativeName>
        <fullName evidence="1">MQO</fullName>
    </alternativeName>
    <alternativeName>
        <fullName evidence="1">Malate dehydrogenase [quinone]</fullName>
    </alternativeName>
</protein>
<dbReference type="EC" id="1.1.5.4" evidence="1"/>
<dbReference type="EMBL" id="CP000569">
    <property type="protein sequence ID" value="ABN74498.1"/>
    <property type="molecule type" value="Genomic_DNA"/>
</dbReference>
<dbReference type="RefSeq" id="WP_009875515.1">
    <property type="nucleotide sequence ID" value="NC_009053.1"/>
</dbReference>
<dbReference type="SMR" id="A3N262"/>
<dbReference type="STRING" id="416269.APL_1414"/>
<dbReference type="EnsemblBacteria" id="ABN74498">
    <property type="protein sequence ID" value="ABN74498"/>
    <property type="gene ID" value="APL_1414"/>
</dbReference>
<dbReference type="KEGG" id="apl:APL_1414"/>
<dbReference type="PATRIC" id="fig|416269.6.peg.1473"/>
<dbReference type="eggNOG" id="COG0579">
    <property type="taxonomic scope" value="Bacteria"/>
</dbReference>
<dbReference type="HOGENOM" id="CLU_028151_0_0_6"/>
<dbReference type="UniPathway" id="UPA00223">
    <property type="reaction ID" value="UER01008"/>
</dbReference>
<dbReference type="Proteomes" id="UP000001432">
    <property type="component" value="Chromosome"/>
</dbReference>
<dbReference type="GO" id="GO:0047545">
    <property type="term" value="F:2-hydroxyglutarate dehydrogenase activity"/>
    <property type="evidence" value="ECO:0007669"/>
    <property type="project" value="TreeGrafter"/>
</dbReference>
<dbReference type="GO" id="GO:0008924">
    <property type="term" value="F:L-malate dehydrogenase (quinone) activity"/>
    <property type="evidence" value="ECO:0007669"/>
    <property type="project" value="UniProtKB-UniRule"/>
</dbReference>
<dbReference type="GO" id="GO:0006099">
    <property type="term" value="P:tricarboxylic acid cycle"/>
    <property type="evidence" value="ECO:0007669"/>
    <property type="project" value="UniProtKB-UniRule"/>
</dbReference>
<dbReference type="HAMAP" id="MF_00212">
    <property type="entry name" value="MQO"/>
    <property type="match status" value="1"/>
</dbReference>
<dbReference type="InterPro" id="IPR036188">
    <property type="entry name" value="FAD/NAD-bd_sf"/>
</dbReference>
<dbReference type="InterPro" id="IPR006231">
    <property type="entry name" value="MQO"/>
</dbReference>
<dbReference type="NCBIfam" id="TIGR01320">
    <property type="entry name" value="mal_quin_oxido"/>
    <property type="match status" value="1"/>
</dbReference>
<dbReference type="NCBIfam" id="NF003603">
    <property type="entry name" value="PRK05257.1-1"/>
    <property type="match status" value="1"/>
</dbReference>
<dbReference type="NCBIfam" id="NF003604">
    <property type="entry name" value="PRK05257.1-3"/>
    <property type="match status" value="1"/>
</dbReference>
<dbReference type="NCBIfam" id="NF003606">
    <property type="entry name" value="PRK05257.2-1"/>
    <property type="match status" value="1"/>
</dbReference>
<dbReference type="NCBIfam" id="NF003608">
    <property type="entry name" value="PRK05257.2-4"/>
    <property type="match status" value="1"/>
</dbReference>
<dbReference type="NCBIfam" id="NF003611">
    <property type="entry name" value="PRK05257.3-2"/>
    <property type="match status" value="1"/>
</dbReference>
<dbReference type="NCBIfam" id="NF009875">
    <property type="entry name" value="PRK13339.1"/>
    <property type="match status" value="1"/>
</dbReference>
<dbReference type="PANTHER" id="PTHR43104">
    <property type="entry name" value="L-2-HYDROXYGLUTARATE DEHYDROGENASE, MITOCHONDRIAL"/>
    <property type="match status" value="1"/>
</dbReference>
<dbReference type="PANTHER" id="PTHR43104:SF2">
    <property type="entry name" value="L-2-HYDROXYGLUTARATE DEHYDROGENASE, MITOCHONDRIAL"/>
    <property type="match status" value="1"/>
</dbReference>
<dbReference type="Pfam" id="PF06039">
    <property type="entry name" value="Mqo"/>
    <property type="match status" value="1"/>
</dbReference>
<dbReference type="SUPFAM" id="SSF51905">
    <property type="entry name" value="FAD/NAD(P)-binding domain"/>
    <property type="match status" value="1"/>
</dbReference>
<gene>
    <name evidence="1" type="primary">mqo</name>
    <name type="ordered locus">APL_1414</name>
</gene>
<evidence type="ECO:0000255" key="1">
    <source>
        <dbReference type="HAMAP-Rule" id="MF_00212"/>
    </source>
</evidence>
<name>MQO_ACTP2</name>
<proteinExistence type="inferred from homology"/>
<feature type="chain" id="PRO_0000325484" description="Probable malate:quinone oxidoreductase">
    <location>
        <begin position="1"/>
        <end position="491"/>
    </location>
</feature>
<sequence length="491" mass="54074">MQDSSSALESYSDVTLIGAGIMSGTLGAFLTELAPEKSLAIFEKLSAVGLESSNEWNNAGTGHSALCELNYTEQKANGEVSVERAVKICEDFQLSLQLWSYLVETGRIQAPREFIHRIPHISFVQGEQNAQFLQKRYQSLAQSHLFEGMQFSRDHQQLAQWMPLMMQNRDSNETLAASYIQYGTDVNFGELTRKLFDYLVKQKAELNLNHTVKNIQRLANGEWKLTVVDQQGQKRVHRSKFVFIGGGGGALPLLQKSGITDGKNVGGFPVSGLFMVCNNPEVIAKHNAKVYGKAKLGAPPMSVPHLDTRFIEGKQSLLFGPFAGFTLKFLKQGSVLDLPTSVTPTNFCSVTKAGIKNLPLAHYLMKQAMLTKAQRMADLREFVPDAKDEDWDVVVAGQRVQVIKGGEMRFGTEVIRAEDGSLAALLGASPGASTSVKAMLDVLVSCFAAELPQWQAKLTQMLPSYGKALRNEPQLYAQIKQRVDQVLALAN</sequence>
<comment type="catalytic activity">
    <reaction evidence="1">
        <text>(S)-malate + a quinone = a quinol + oxaloacetate</text>
        <dbReference type="Rhea" id="RHEA:46012"/>
        <dbReference type="ChEBI" id="CHEBI:15589"/>
        <dbReference type="ChEBI" id="CHEBI:16452"/>
        <dbReference type="ChEBI" id="CHEBI:24646"/>
        <dbReference type="ChEBI" id="CHEBI:132124"/>
        <dbReference type="EC" id="1.1.5.4"/>
    </reaction>
</comment>
<comment type="cofactor">
    <cofactor evidence="1">
        <name>FAD</name>
        <dbReference type="ChEBI" id="CHEBI:57692"/>
    </cofactor>
</comment>
<comment type="pathway">
    <text evidence="1">Carbohydrate metabolism; tricarboxylic acid cycle; oxaloacetate from (S)-malate (quinone route): step 1/1.</text>
</comment>
<comment type="similarity">
    <text evidence="1">Belongs to the MQO family.</text>
</comment>